<comment type="function">
    <text evidence="3">Converts lysophosphatidic acid (LPA) into phosphatidic acid by incorporating an acyl moiety at the 2 position. This enzyme can utilize either acyl-CoA or acyl-ACP as the fatty acyl donor.</text>
</comment>
<comment type="catalytic activity">
    <reaction>
        <text>a 1-acyl-sn-glycero-3-phosphate + an acyl-CoA = a 1,2-diacyl-sn-glycero-3-phosphate + CoA</text>
        <dbReference type="Rhea" id="RHEA:19709"/>
        <dbReference type="ChEBI" id="CHEBI:57287"/>
        <dbReference type="ChEBI" id="CHEBI:57970"/>
        <dbReference type="ChEBI" id="CHEBI:58342"/>
        <dbReference type="ChEBI" id="CHEBI:58608"/>
        <dbReference type="EC" id="2.3.1.51"/>
    </reaction>
</comment>
<comment type="catalytic activity">
    <reaction>
        <text>a fatty acyl-[ACP] + a 1-acyl-sn-glycero-3-phosphate = a 1,2-diacyl-sn-glycero-3-phosphate + holo-[ACP]</text>
        <dbReference type="Rhea" id="RHEA:42296"/>
        <dbReference type="Rhea" id="RHEA-COMP:9685"/>
        <dbReference type="Rhea" id="RHEA-COMP:14125"/>
        <dbReference type="ChEBI" id="CHEBI:57970"/>
        <dbReference type="ChEBI" id="CHEBI:58608"/>
        <dbReference type="ChEBI" id="CHEBI:64479"/>
        <dbReference type="ChEBI" id="CHEBI:138651"/>
        <dbReference type="EC" id="2.3.1.n4"/>
    </reaction>
</comment>
<comment type="pathway">
    <text>Phospholipid metabolism; CDP-diacylglycerol biosynthesis; CDP-diacylglycerol from sn-glycerol 3-phosphate: step 2/3.</text>
</comment>
<comment type="subcellular location">
    <subcellularLocation>
        <location evidence="2">Cell inner membrane</location>
        <topology evidence="2">Peripheral membrane protein</topology>
    </subcellularLocation>
</comment>
<comment type="domain">
    <text evidence="1">The HXXXXD motif is essential for acyltransferase activity and may constitute the binding site for the phosphate moiety of the glycerol-3-phosphate.</text>
</comment>
<comment type="similarity">
    <text evidence="4">Belongs to the 1-acyl-sn-glycerol-3-phosphate acyltransferase family.</text>
</comment>
<organism>
    <name type="scientific">Escherichia coli (strain K12)</name>
    <dbReference type="NCBI Taxonomy" id="83333"/>
    <lineage>
        <taxon>Bacteria</taxon>
        <taxon>Pseudomonadati</taxon>
        <taxon>Pseudomonadota</taxon>
        <taxon>Gammaproteobacteria</taxon>
        <taxon>Enterobacterales</taxon>
        <taxon>Enterobacteriaceae</taxon>
        <taxon>Escherichia</taxon>
    </lineage>
</organism>
<name>PLSC_ECOLI</name>
<protein>
    <recommendedName>
        <fullName>1-acyl-sn-glycerol-3-phosphate acyltransferase</fullName>
        <shortName>1-AGP acyltransferase</shortName>
        <shortName>1-AGPAT</shortName>
        <ecNumber>2.3.1.51</ecNumber>
        <ecNumber>2.3.1.n4</ecNumber>
    </recommendedName>
    <alternativeName>
        <fullName>Lysophosphatidic acid acyltransferase</fullName>
        <shortName>LPAAT</shortName>
    </alternativeName>
    <alternativeName>
        <fullName>Phosphatidic acid synthase</fullName>
        <shortName>PA synthase</shortName>
    </alternativeName>
</protein>
<reference key="1">
    <citation type="journal article" date="1992" name="Mol. Gen. Genet.">
        <title>Characterization of the Escherichia coli gene for 1-acyl-sn-glycerol-3-phosphate acyltransferase (plsC).</title>
        <authorList>
            <person name="Coleman J."/>
        </authorList>
    </citation>
    <scope>NUCLEOTIDE SEQUENCE [GENOMIC DNA]</scope>
    <scope>PROTEIN SEQUENCE OF 1-7</scope>
    <scope>FORMYLATION AT MET-1</scope>
    <scope>SUBCELLULAR LOCATION</scope>
</reference>
<reference key="2">
    <citation type="journal article" date="1997" name="Science">
        <title>The complete genome sequence of Escherichia coli K-12.</title>
        <authorList>
            <person name="Blattner F.R."/>
            <person name="Plunkett G. III"/>
            <person name="Bloch C.A."/>
            <person name="Perna N.T."/>
            <person name="Burland V."/>
            <person name="Riley M."/>
            <person name="Collado-Vides J."/>
            <person name="Glasner J.D."/>
            <person name="Rode C.K."/>
            <person name="Mayhew G.F."/>
            <person name="Gregor J."/>
            <person name="Davis N.W."/>
            <person name="Kirkpatrick H.A."/>
            <person name="Goeden M.A."/>
            <person name="Rose D.J."/>
            <person name="Mau B."/>
            <person name="Shao Y."/>
        </authorList>
    </citation>
    <scope>NUCLEOTIDE SEQUENCE [LARGE SCALE GENOMIC DNA]</scope>
    <source>
        <strain>K12 / MG1655 / ATCC 47076</strain>
    </source>
</reference>
<reference key="3">
    <citation type="journal article" date="2006" name="Mol. Syst. Biol.">
        <title>Highly accurate genome sequences of Escherichia coli K-12 strains MG1655 and W3110.</title>
        <authorList>
            <person name="Hayashi K."/>
            <person name="Morooka N."/>
            <person name="Yamamoto Y."/>
            <person name="Fujita K."/>
            <person name="Isono K."/>
            <person name="Choi S."/>
            <person name="Ohtsubo E."/>
            <person name="Baba T."/>
            <person name="Wanner B.L."/>
            <person name="Mori H."/>
            <person name="Horiuchi T."/>
        </authorList>
    </citation>
    <scope>NUCLEOTIDE SEQUENCE [LARGE SCALE GENOMIC DNA]</scope>
    <source>
        <strain>K12 / W3110 / ATCC 27325 / DSM 5911</strain>
    </source>
</reference>
<reference key="4">
    <citation type="journal article" date="1990" name="J. Biol. Chem.">
        <title>Characterization of Escherichia coli cells deficient in 1-acyl-sn-glycerol-3- phosphate acyltransferase activity.</title>
        <authorList>
            <person name="Coleman J."/>
        </authorList>
    </citation>
    <scope>FUNCTION</scope>
</reference>
<reference key="5">
    <citation type="journal article" date="2006" name="Mol. Cell">
        <title>Acyl-phosphates initiate membrane phospholipid synthesis in Gram-positive pathogens.</title>
        <authorList>
            <person name="Lu Y.-J."/>
            <person name="Zhang Y.-M."/>
            <person name="Grimes K.D."/>
            <person name="Qi J."/>
            <person name="Lee R.E."/>
            <person name="Rock C.O."/>
        </authorList>
    </citation>
    <scope>FATTY ACYL DONOR SPECIFICITY</scope>
</reference>
<evidence type="ECO:0000250" key="1"/>
<evidence type="ECO:0000269" key="2">
    <source>
    </source>
</evidence>
<evidence type="ECO:0000269" key="3">
    <source>
    </source>
</evidence>
<evidence type="ECO:0000305" key="4"/>
<sequence>MLYIFRLIITVIYSILVCVFGSIYCLFSPRNPKHVATFGHMFGRLAPLFGLKVECRKPTDAESYGNAIYIANHQNNYDMVTASNIVQPPTVTVGKKSLLWIPFFGQLYWLTGNLLIDRNNRTKAHGTIAEVVNHFKKRRISIWMFPEGTRSRGRGLLPFKTGAFHAAIAAGVPIIPVCVSTTSNKINLNRLHNGLVIVEMLPPIDVSQYGKDQVRELAAHCRSIMEQKIAELDKEVAEREAAGKV</sequence>
<feature type="chain" id="PRO_0000208168" description="1-acyl-sn-glycerol-3-phosphate acyltransferase">
    <location>
        <begin position="1"/>
        <end position="245"/>
    </location>
</feature>
<feature type="short sequence motif" description="HXXXXD motif">
    <location>
        <begin position="73"/>
        <end position="78"/>
    </location>
</feature>
<feature type="modified residue" description="N-formylmethionine" evidence="2">
    <location>
        <position position="1"/>
    </location>
</feature>
<proteinExistence type="evidence at protein level"/>
<gene>
    <name type="primary">plsC</name>
    <name type="synonym">parF</name>
    <name type="ordered locus">b3018</name>
    <name type="ordered locus">JW2986</name>
</gene>
<dbReference type="EC" id="2.3.1.51"/>
<dbReference type="EC" id="2.3.1.n4"/>
<dbReference type="EMBL" id="M63491">
    <property type="protein sequence ID" value="AAA24397.1"/>
    <property type="molecule type" value="Genomic_DNA"/>
</dbReference>
<dbReference type="EMBL" id="U28377">
    <property type="protein sequence ID" value="AAA69186.1"/>
    <property type="molecule type" value="Genomic_DNA"/>
</dbReference>
<dbReference type="EMBL" id="U00096">
    <property type="protein sequence ID" value="AAC76054.1"/>
    <property type="molecule type" value="Genomic_DNA"/>
</dbReference>
<dbReference type="EMBL" id="AP009048">
    <property type="protein sequence ID" value="BAE77074.1"/>
    <property type="molecule type" value="Genomic_DNA"/>
</dbReference>
<dbReference type="PIR" id="S20460">
    <property type="entry name" value="S20460"/>
</dbReference>
<dbReference type="RefSeq" id="NP_417490.1">
    <property type="nucleotide sequence ID" value="NC_000913.3"/>
</dbReference>
<dbReference type="RefSeq" id="WP_000965722.1">
    <property type="nucleotide sequence ID" value="NZ_SSZK01000023.1"/>
</dbReference>
<dbReference type="SMR" id="P26647"/>
<dbReference type="BioGRID" id="4261779">
    <property type="interactions" value="259"/>
</dbReference>
<dbReference type="DIP" id="DIP-10516N"/>
<dbReference type="FunCoup" id="P26647">
    <property type="interactions" value="528"/>
</dbReference>
<dbReference type="IntAct" id="P26647">
    <property type="interactions" value="2"/>
</dbReference>
<dbReference type="STRING" id="511145.b3018"/>
<dbReference type="ChEMBL" id="CHEMBL3309004"/>
<dbReference type="PaxDb" id="511145-b3018"/>
<dbReference type="EnsemblBacteria" id="AAC76054">
    <property type="protein sequence ID" value="AAC76054"/>
    <property type="gene ID" value="b3018"/>
</dbReference>
<dbReference type="GeneID" id="947496"/>
<dbReference type="KEGG" id="ecj:JW2986"/>
<dbReference type="KEGG" id="eco:b3018"/>
<dbReference type="KEGG" id="ecoc:C3026_16490"/>
<dbReference type="PATRIC" id="fig|1411691.4.peg.3712"/>
<dbReference type="EchoBASE" id="EB1351"/>
<dbReference type="eggNOG" id="COG0204">
    <property type="taxonomic scope" value="Bacteria"/>
</dbReference>
<dbReference type="HOGENOM" id="CLU_027938_10_3_6"/>
<dbReference type="InParanoid" id="P26647"/>
<dbReference type="OMA" id="KKSLVWI"/>
<dbReference type="OrthoDB" id="5290997at2"/>
<dbReference type="PhylomeDB" id="P26647"/>
<dbReference type="BioCyc" id="EcoCyc:1-ACYLGLYCEROL-3-P-ACYLTRANSFER-MONOMER"/>
<dbReference type="BioCyc" id="MetaCyc:1-ACYLGLYCEROL-3-P-ACYLTRANSFER-MONOMER"/>
<dbReference type="UniPathway" id="UPA00557">
    <property type="reaction ID" value="UER00613"/>
</dbReference>
<dbReference type="PRO" id="PR:P26647"/>
<dbReference type="Proteomes" id="UP000000625">
    <property type="component" value="Chromosome"/>
</dbReference>
<dbReference type="GO" id="GO:0005886">
    <property type="term" value="C:plasma membrane"/>
    <property type="evidence" value="ECO:0000314"/>
    <property type="project" value="EcoCyc"/>
</dbReference>
<dbReference type="GO" id="GO:0003841">
    <property type="term" value="F:1-acylglycerol-3-phosphate O-acyltransferase activity"/>
    <property type="evidence" value="ECO:0000314"/>
    <property type="project" value="EcoCyc"/>
</dbReference>
<dbReference type="GO" id="GO:0016024">
    <property type="term" value="P:CDP-diacylglycerol biosynthetic process"/>
    <property type="evidence" value="ECO:0007669"/>
    <property type="project" value="UniProtKB-UniPathway"/>
</dbReference>
<dbReference type="GO" id="GO:0006654">
    <property type="term" value="P:phosphatidic acid biosynthetic process"/>
    <property type="evidence" value="ECO:0000315"/>
    <property type="project" value="EcoCyc"/>
</dbReference>
<dbReference type="CDD" id="cd07989">
    <property type="entry name" value="LPLAT_AGPAT-like"/>
    <property type="match status" value="1"/>
</dbReference>
<dbReference type="InterPro" id="IPR004552">
    <property type="entry name" value="AGP_acyltrans"/>
</dbReference>
<dbReference type="InterPro" id="IPR002123">
    <property type="entry name" value="Plipid/glycerol_acylTrfase"/>
</dbReference>
<dbReference type="NCBIfam" id="TIGR00530">
    <property type="entry name" value="AGP_acyltrn"/>
    <property type="match status" value="1"/>
</dbReference>
<dbReference type="NCBIfam" id="NF011593">
    <property type="entry name" value="PRK15018.1"/>
    <property type="match status" value="1"/>
</dbReference>
<dbReference type="PANTHER" id="PTHR10434">
    <property type="entry name" value="1-ACYL-SN-GLYCEROL-3-PHOSPHATE ACYLTRANSFERASE"/>
    <property type="match status" value="1"/>
</dbReference>
<dbReference type="PANTHER" id="PTHR10434:SF11">
    <property type="entry name" value="1-ACYL-SN-GLYCEROL-3-PHOSPHATE ACYLTRANSFERASE"/>
    <property type="match status" value="1"/>
</dbReference>
<dbReference type="Pfam" id="PF01553">
    <property type="entry name" value="Acyltransferase"/>
    <property type="match status" value="1"/>
</dbReference>
<dbReference type="SMART" id="SM00563">
    <property type="entry name" value="PlsC"/>
    <property type="match status" value="1"/>
</dbReference>
<dbReference type="SUPFAM" id="SSF69593">
    <property type="entry name" value="Glycerol-3-phosphate (1)-acyltransferase"/>
    <property type="match status" value="1"/>
</dbReference>
<accession>P26647</accession>
<accession>Q2M9I2</accession>
<keyword id="KW-0012">Acyltransferase</keyword>
<keyword id="KW-0997">Cell inner membrane</keyword>
<keyword id="KW-1003">Cell membrane</keyword>
<keyword id="KW-0903">Direct protein sequencing</keyword>
<keyword id="KW-0291">Formylation</keyword>
<keyword id="KW-0444">Lipid biosynthesis</keyword>
<keyword id="KW-0443">Lipid metabolism</keyword>
<keyword id="KW-0472">Membrane</keyword>
<keyword id="KW-0594">Phospholipid biosynthesis</keyword>
<keyword id="KW-1208">Phospholipid metabolism</keyword>
<keyword id="KW-1185">Reference proteome</keyword>
<keyword id="KW-0808">Transferase</keyword>